<protein>
    <recommendedName>
        <fullName evidence="1">Uroporphyrinogen decarboxylase</fullName>
        <shortName evidence="1">UPD</shortName>
        <shortName evidence="1">URO-D</shortName>
        <ecNumber evidence="1">4.1.1.37</ecNumber>
    </recommendedName>
</protein>
<gene>
    <name evidence="1" type="primary">hemE</name>
    <name type="ordered locus">Pmen_0552</name>
</gene>
<dbReference type="EC" id="4.1.1.37" evidence="1"/>
<dbReference type="EMBL" id="CP000680">
    <property type="protein sequence ID" value="ABP83322.1"/>
    <property type="molecule type" value="Genomic_DNA"/>
</dbReference>
<dbReference type="SMR" id="A4XPQ6"/>
<dbReference type="STRING" id="399739.Pmen_0552"/>
<dbReference type="KEGG" id="pmy:Pmen_0552"/>
<dbReference type="PATRIC" id="fig|399739.8.peg.561"/>
<dbReference type="eggNOG" id="COG0407">
    <property type="taxonomic scope" value="Bacteria"/>
</dbReference>
<dbReference type="HOGENOM" id="CLU_040933_0_0_6"/>
<dbReference type="OrthoDB" id="9806656at2"/>
<dbReference type="UniPathway" id="UPA00251">
    <property type="reaction ID" value="UER00321"/>
</dbReference>
<dbReference type="GO" id="GO:0005829">
    <property type="term" value="C:cytosol"/>
    <property type="evidence" value="ECO:0007669"/>
    <property type="project" value="TreeGrafter"/>
</dbReference>
<dbReference type="GO" id="GO:0004853">
    <property type="term" value="F:uroporphyrinogen decarboxylase activity"/>
    <property type="evidence" value="ECO:0007669"/>
    <property type="project" value="UniProtKB-UniRule"/>
</dbReference>
<dbReference type="GO" id="GO:0019353">
    <property type="term" value="P:protoporphyrinogen IX biosynthetic process from glutamate"/>
    <property type="evidence" value="ECO:0007669"/>
    <property type="project" value="TreeGrafter"/>
</dbReference>
<dbReference type="CDD" id="cd00717">
    <property type="entry name" value="URO-D"/>
    <property type="match status" value="1"/>
</dbReference>
<dbReference type="FunFam" id="3.20.20.210:FF:000001">
    <property type="entry name" value="Uroporphyrinogen decarboxylase"/>
    <property type="match status" value="1"/>
</dbReference>
<dbReference type="Gene3D" id="3.20.20.210">
    <property type="match status" value="1"/>
</dbReference>
<dbReference type="HAMAP" id="MF_00218">
    <property type="entry name" value="URO_D"/>
    <property type="match status" value="1"/>
</dbReference>
<dbReference type="InterPro" id="IPR038071">
    <property type="entry name" value="UROD/MetE-like_sf"/>
</dbReference>
<dbReference type="InterPro" id="IPR006361">
    <property type="entry name" value="Uroporphyrinogen_deCO2ase_HemE"/>
</dbReference>
<dbReference type="InterPro" id="IPR000257">
    <property type="entry name" value="Uroporphyrinogen_deCOase"/>
</dbReference>
<dbReference type="NCBIfam" id="TIGR01464">
    <property type="entry name" value="hemE"/>
    <property type="match status" value="1"/>
</dbReference>
<dbReference type="PANTHER" id="PTHR21091">
    <property type="entry name" value="METHYLTETRAHYDROFOLATE:HOMOCYSTEINE METHYLTRANSFERASE RELATED"/>
    <property type="match status" value="1"/>
</dbReference>
<dbReference type="PANTHER" id="PTHR21091:SF169">
    <property type="entry name" value="UROPORPHYRINOGEN DECARBOXYLASE"/>
    <property type="match status" value="1"/>
</dbReference>
<dbReference type="Pfam" id="PF01208">
    <property type="entry name" value="URO-D"/>
    <property type="match status" value="1"/>
</dbReference>
<dbReference type="SUPFAM" id="SSF51726">
    <property type="entry name" value="UROD/MetE-like"/>
    <property type="match status" value="1"/>
</dbReference>
<dbReference type="PROSITE" id="PS00906">
    <property type="entry name" value="UROD_1"/>
    <property type="match status" value="1"/>
</dbReference>
<dbReference type="PROSITE" id="PS00907">
    <property type="entry name" value="UROD_2"/>
    <property type="match status" value="1"/>
</dbReference>
<sequence length="355" mass="38502">MTALKNDRFLRALLKQPVDVTPIWMMRQAGRYLPEYRATRAKAGDFVSLMKNPELACEVTIQPLDRYPQLDAAILFSDILTIPDAMGQGLYFETGEGPRFKKAVGSLADIEALPVPDPEKDLGYVMDAVRTIRRELNGRVPLIGFSGSPWTLATYMVEGGSSKDFRKSKAMLYDNPQAMHALLDKLAQSVTAYLNGQILAGAQAVQIFDSWGGALSAAAYQEFSLAYMKKIVDGLIREHDGRRVPVILFTKGGGLWLESMADSGAEALGLDWTCDIGSARARVGSKVALQGNMDPAVLYAKPAAIRAEVARILAAYGAGSGHVFNLGHGITPEVDPAHAGAFFEAVHELSAAYHR</sequence>
<evidence type="ECO:0000255" key="1">
    <source>
        <dbReference type="HAMAP-Rule" id="MF_00218"/>
    </source>
</evidence>
<proteinExistence type="inferred from homology"/>
<reference key="1">
    <citation type="submission" date="2007-04" db="EMBL/GenBank/DDBJ databases">
        <title>Complete sequence of Pseudomonas mendocina ymp.</title>
        <authorList>
            <consortium name="US DOE Joint Genome Institute"/>
            <person name="Copeland A."/>
            <person name="Lucas S."/>
            <person name="Lapidus A."/>
            <person name="Barry K."/>
            <person name="Glavina del Rio T."/>
            <person name="Dalin E."/>
            <person name="Tice H."/>
            <person name="Pitluck S."/>
            <person name="Kiss H."/>
            <person name="Brettin T."/>
            <person name="Detter J.C."/>
            <person name="Bruce D."/>
            <person name="Han C."/>
            <person name="Schmutz J."/>
            <person name="Larimer F."/>
            <person name="Land M."/>
            <person name="Hauser L."/>
            <person name="Kyrpides N."/>
            <person name="Mikhailova N."/>
            <person name="Hersman L."/>
            <person name="Dubois J."/>
            <person name="Maurice P."/>
            <person name="Richardson P."/>
        </authorList>
    </citation>
    <scope>NUCLEOTIDE SEQUENCE [LARGE SCALE GENOMIC DNA]</scope>
    <source>
        <strain>ymp</strain>
    </source>
</reference>
<keyword id="KW-0963">Cytoplasm</keyword>
<keyword id="KW-0210">Decarboxylase</keyword>
<keyword id="KW-0456">Lyase</keyword>
<keyword id="KW-0627">Porphyrin biosynthesis</keyword>
<accession>A4XPQ6</accession>
<name>DCUP_ECTM1</name>
<organism>
    <name type="scientific">Ectopseudomonas mendocina (strain ymp)</name>
    <name type="common">Pseudomonas mendocina</name>
    <dbReference type="NCBI Taxonomy" id="399739"/>
    <lineage>
        <taxon>Bacteria</taxon>
        <taxon>Pseudomonadati</taxon>
        <taxon>Pseudomonadota</taxon>
        <taxon>Gammaproteobacteria</taxon>
        <taxon>Pseudomonadales</taxon>
        <taxon>Pseudomonadaceae</taxon>
        <taxon>Ectopseudomonas</taxon>
    </lineage>
</organism>
<feature type="chain" id="PRO_1000023950" description="Uroporphyrinogen decarboxylase">
    <location>
        <begin position="1"/>
        <end position="355"/>
    </location>
</feature>
<feature type="binding site" evidence="1">
    <location>
        <begin position="27"/>
        <end position="31"/>
    </location>
    <ligand>
        <name>substrate</name>
    </ligand>
</feature>
<feature type="binding site" evidence="1">
    <location>
        <position position="78"/>
    </location>
    <ligand>
        <name>substrate</name>
    </ligand>
</feature>
<feature type="binding site" evidence="1">
    <location>
        <position position="155"/>
    </location>
    <ligand>
        <name>substrate</name>
    </ligand>
</feature>
<feature type="binding site" evidence="1">
    <location>
        <position position="210"/>
    </location>
    <ligand>
        <name>substrate</name>
    </ligand>
</feature>
<feature type="binding site" evidence="1">
    <location>
        <position position="328"/>
    </location>
    <ligand>
        <name>substrate</name>
    </ligand>
</feature>
<feature type="site" description="Transition state stabilizer" evidence="1">
    <location>
        <position position="78"/>
    </location>
</feature>
<comment type="function">
    <text evidence="1">Catalyzes the decarboxylation of four acetate groups of uroporphyrinogen-III to yield coproporphyrinogen-III.</text>
</comment>
<comment type="catalytic activity">
    <reaction evidence="1">
        <text>uroporphyrinogen III + 4 H(+) = coproporphyrinogen III + 4 CO2</text>
        <dbReference type="Rhea" id="RHEA:19865"/>
        <dbReference type="ChEBI" id="CHEBI:15378"/>
        <dbReference type="ChEBI" id="CHEBI:16526"/>
        <dbReference type="ChEBI" id="CHEBI:57308"/>
        <dbReference type="ChEBI" id="CHEBI:57309"/>
        <dbReference type="EC" id="4.1.1.37"/>
    </reaction>
</comment>
<comment type="pathway">
    <text evidence="1">Porphyrin-containing compound metabolism; protoporphyrin-IX biosynthesis; coproporphyrinogen-III from 5-aminolevulinate: step 4/4.</text>
</comment>
<comment type="subunit">
    <text evidence="1">Homodimer.</text>
</comment>
<comment type="subcellular location">
    <subcellularLocation>
        <location evidence="1">Cytoplasm</location>
    </subcellularLocation>
</comment>
<comment type="similarity">
    <text evidence="1">Belongs to the uroporphyrinogen decarboxylase family.</text>
</comment>